<gene>
    <name evidence="1" type="primary">secF</name>
    <name type="ordered locus">Mmc1_3211</name>
</gene>
<dbReference type="EMBL" id="CP000471">
    <property type="protein sequence ID" value="ABK45701.1"/>
    <property type="molecule type" value="Genomic_DNA"/>
</dbReference>
<dbReference type="RefSeq" id="WP_011714764.1">
    <property type="nucleotide sequence ID" value="NC_008576.1"/>
</dbReference>
<dbReference type="SMR" id="A0LCK8"/>
<dbReference type="STRING" id="156889.Mmc1_3211"/>
<dbReference type="KEGG" id="mgm:Mmc1_3211"/>
<dbReference type="eggNOG" id="COG0341">
    <property type="taxonomic scope" value="Bacteria"/>
</dbReference>
<dbReference type="HOGENOM" id="CLU_050012_0_1_5"/>
<dbReference type="OrthoDB" id="9774769at2"/>
<dbReference type="Proteomes" id="UP000002586">
    <property type="component" value="Chromosome"/>
</dbReference>
<dbReference type="GO" id="GO:0005886">
    <property type="term" value="C:plasma membrane"/>
    <property type="evidence" value="ECO:0007669"/>
    <property type="project" value="UniProtKB-SubCell"/>
</dbReference>
<dbReference type="GO" id="GO:0015450">
    <property type="term" value="F:protein-transporting ATPase activity"/>
    <property type="evidence" value="ECO:0007669"/>
    <property type="project" value="InterPro"/>
</dbReference>
<dbReference type="GO" id="GO:0065002">
    <property type="term" value="P:intracellular protein transmembrane transport"/>
    <property type="evidence" value="ECO:0007669"/>
    <property type="project" value="UniProtKB-UniRule"/>
</dbReference>
<dbReference type="GO" id="GO:0006605">
    <property type="term" value="P:protein targeting"/>
    <property type="evidence" value="ECO:0007669"/>
    <property type="project" value="UniProtKB-UniRule"/>
</dbReference>
<dbReference type="GO" id="GO:0043952">
    <property type="term" value="P:protein transport by the Sec complex"/>
    <property type="evidence" value="ECO:0007669"/>
    <property type="project" value="UniProtKB-UniRule"/>
</dbReference>
<dbReference type="FunFam" id="1.20.1640.10:FF:000024">
    <property type="entry name" value="Multifunctional fusion protein"/>
    <property type="match status" value="1"/>
</dbReference>
<dbReference type="Gene3D" id="1.20.1640.10">
    <property type="entry name" value="Multidrug efflux transporter AcrB transmembrane domain"/>
    <property type="match status" value="1"/>
</dbReference>
<dbReference type="HAMAP" id="MF_01464_B">
    <property type="entry name" value="SecF_B"/>
    <property type="match status" value="1"/>
</dbReference>
<dbReference type="InterPro" id="IPR022813">
    <property type="entry name" value="SecD/SecF_arch_bac"/>
</dbReference>
<dbReference type="InterPro" id="IPR022645">
    <property type="entry name" value="SecD/SecF_bac"/>
</dbReference>
<dbReference type="InterPro" id="IPR022646">
    <property type="entry name" value="SecD/SecF_CS"/>
</dbReference>
<dbReference type="InterPro" id="IPR048634">
    <property type="entry name" value="SecD_SecF_C"/>
</dbReference>
<dbReference type="InterPro" id="IPR055344">
    <property type="entry name" value="SecD_SecF_C_bact"/>
</dbReference>
<dbReference type="InterPro" id="IPR005665">
    <property type="entry name" value="SecF_bac"/>
</dbReference>
<dbReference type="NCBIfam" id="TIGR00916">
    <property type="entry name" value="2A0604s01"/>
    <property type="match status" value="1"/>
</dbReference>
<dbReference type="NCBIfam" id="TIGR00966">
    <property type="entry name" value="transloc_SecF"/>
    <property type="match status" value="1"/>
</dbReference>
<dbReference type="PANTHER" id="PTHR30081:SF8">
    <property type="entry name" value="PROTEIN TRANSLOCASE SUBUNIT SECF"/>
    <property type="match status" value="1"/>
</dbReference>
<dbReference type="PANTHER" id="PTHR30081">
    <property type="entry name" value="PROTEIN-EXPORT MEMBRANE PROTEIN SEC"/>
    <property type="match status" value="1"/>
</dbReference>
<dbReference type="Pfam" id="PF07549">
    <property type="entry name" value="Sec_GG"/>
    <property type="match status" value="1"/>
</dbReference>
<dbReference type="Pfam" id="PF02355">
    <property type="entry name" value="SecD_SecF_C"/>
    <property type="match status" value="1"/>
</dbReference>
<dbReference type="PRINTS" id="PR01755">
    <property type="entry name" value="SECFTRNLCASE"/>
</dbReference>
<dbReference type="SUPFAM" id="SSF82866">
    <property type="entry name" value="Multidrug efflux transporter AcrB transmembrane domain"/>
    <property type="match status" value="1"/>
</dbReference>
<reference key="1">
    <citation type="journal article" date="2009" name="Appl. Environ. Microbiol.">
        <title>Complete genome sequence of the chemolithoautotrophic marine magnetotactic coccus strain MC-1.</title>
        <authorList>
            <person name="Schubbe S."/>
            <person name="Williams T.J."/>
            <person name="Xie G."/>
            <person name="Kiss H.E."/>
            <person name="Brettin T.S."/>
            <person name="Martinez D."/>
            <person name="Ross C.A."/>
            <person name="Schuler D."/>
            <person name="Cox B.L."/>
            <person name="Nealson K.H."/>
            <person name="Bazylinski D.A."/>
        </authorList>
    </citation>
    <scope>NUCLEOTIDE SEQUENCE [LARGE SCALE GENOMIC DNA]</scope>
    <source>
        <strain>ATCC BAA-1437 / JCM 17883 / MC-1</strain>
    </source>
</reference>
<proteinExistence type="inferred from homology"/>
<feature type="chain" id="PRO_0000412698" description="Protein translocase subunit SecF">
    <location>
        <begin position="1"/>
        <end position="311"/>
    </location>
</feature>
<feature type="transmembrane region" description="Helical" evidence="1">
    <location>
        <begin position="19"/>
        <end position="39"/>
    </location>
</feature>
<feature type="transmembrane region" description="Helical" evidence="1">
    <location>
        <begin position="142"/>
        <end position="162"/>
    </location>
</feature>
<feature type="transmembrane region" description="Helical" evidence="1">
    <location>
        <begin position="166"/>
        <end position="186"/>
    </location>
</feature>
<feature type="transmembrane region" description="Helical" evidence="1">
    <location>
        <begin position="192"/>
        <end position="212"/>
    </location>
</feature>
<feature type="transmembrane region" description="Helical" evidence="1">
    <location>
        <begin position="245"/>
        <end position="265"/>
    </location>
</feature>
<feature type="transmembrane region" description="Helical" evidence="1">
    <location>
        <begin position="272"/>
        <end position="292"/>
    </location>
</feature>
<keyword id="KW-0997">Cell inner membrane</keyword>
<keyword id="KW-1003">Cell membrane</keyword>
<keyword id="KW-0472">Membrane</keyword>
<keyword id="KW-0653">Protein transport</keyword>
<keyword id="KW-1185">Reference proteome</keyword>
<keyword id="KW-0811">Translocation</keyword>
<keyword id="KW-0812">Transmembrane</keyword>
<keyword id="KW-1133">Transmembrane helix</keyword>
<keyword id="KW-0813">Transport</keyword>
<evidence type="ECO:0000255" key="1">
    <source>
        <dbReference type="HAMAP-Rule" id="MF_01464"/>
    </source>
</evidence>
<sequence>MQVFLKATHFDFIGRRKPAIYASLFLIGVSLVSLFTQGLNFGIDFAGGTLIQVRFEKPMDLAPVRQAIAPLDLGDTVVQSFGTPEEVLIRVEKQGADNAAQQAIVSGVLDALKPIAGEHGVEMRRVEYVGPQVGEELTEKGMLAMLYAMVAILIYISFRFELRFALGAVLALVHDVVLTMGFFSVLQKEFTLVVVAALLTVVGYSLNDTIVVYDRIREEMKRMKRQPLATIINEAVNRTLSRTLITSLTTVLVLIALFVLGGAVIHDFALTLLFGVGIGTYSSIFVASPLVLLMDPGSRRKVAAETAEETP</sequence>
<protein>
    <recommendedName>
        <fullName>Protein translocase subunit SecF</fullName>
    </recommendedName>
</protein>
<comment type="function">
    <text evidence="1">Part of the Sec protein translocase complex. Interacts with the SecYEG preprotein conducting channel. SecDF uses the proton motive force (PMF) to complete protein translocation after the ATP-dependent function of SecA.</text>
</comment>
<comment type="subunit">
    <text evidence="1">Forms a complex with SecD. Part of the essential Sec protein translocation apparatus which comprises SecA, SecYEG and auxiliary proteins SecDF-YajC and YidC.</text>
</comment>
<comment type="subcellular location">
    <subcellularLocation>
        <location evidence="1">Cell inner membrane</location>
        <topology evidence="1">Multi-pass membrane protein</topology>
    </subcellularLocation>
</comment>
<comment type="similarity">
    <text evidence="1">Belongs to the SecD/SecF family. SecF subfamily.</text>
</comment>
<name>SECF_MAGMM</name>
<organism>
    <name type="scientific">Magnetococcus marinus (strain ATCC BAA-1437 / JCM 17883 / MC-1)</name>
    <dbReference type="NCBI Taxonomy" id="156889"/>
    <lineage>
        <taxon>Bacteria</taxon>
        <taxon>Pseudomonadati</taxon>
        <taxon>Pseudomonadota</taxon>
        <taxon>Alphaproteobacteria</taxon>
        <taxon>Magnetococcales</taxon>
        <taxon>Magnetococcaceae</taxon>
        <taxon>Magnetococcus</taxon>
    </lineage>
</organism>
<accession>A0LCK8</accession>